<protein>
    <recommendedName>
        <fullName>Olfactory receptor-like protein OLF3</fullName>
    </recommendedName>
</protein>
<reference key="1">
    <citation type="journal article" date="1996" name="Proc. Natl. Acad. Sci. U.S.A.">
        <title>Organization and expression of canine olfactory receptor genes.</title>
        <authorList>
            <person name="Issel-Tarver L."/>
            <person name="Rine J."/>
        </authorList>
    </citation>
    <scope>NUCLEOTIDE SEQUENCE [GENOMIC DNA]</scope>
</reference>
<dbReference type="EMBL" id="U53681">
    <property type="protein sequence ID" value="AAB37241.1"/>
    <property type="molecule type" value="Genomic_DNA"/>
</dbReference>
<dbReference type="RefSeq" id="NP_001017516.1">
    <property type="nucleotide sequence ID" value="NM_001017516.1"/>
</dbReference>
<dbReference type="SMR" id="Q95156"/>
<dbReference type="STRING" id="9615.ENSCAFP00000038051"/>
<dbReference type="PaxDb" id="9612-ENSCAFP00000038051"/>
<dbReference type="Ensembl" id="ENSCAFT00030013226.1">
    <property type="protein sequence ID" value="ENSCAFP00030011562.1"/>
    <property type="gene ID" value="ENSCAFG00030007211.1"/>
</dbReference>
<dbReference type="Ensembl" id="ENSCAFT00845024099.1">
    <property type="protein sequence ID" value="ENSCAFP00845018929.1"/>
    <property type="gene ID" value="ENSCAFG00845013528.1"/>
</dbReference>
<dbReference type="GeneID" id="482727"/>
<dbReference type="CTD" id="26211"/>
<dbReference type="VEuPathDB" id="HostDB:ENSCAFG00845013528"/>
<dbReference type="eggNOG" id="ENOG502SKV6">
    <property type="taxonomic scope" value="Eukaryota"/>
</dbReference>
<dbReference type="GeneTree" id="ENSGT01130000278310"/>
<dbReference type="HOGENOM" id="CLU_012526_1_0_1"/>
<dbReference type="InParanoid" id="Q95156"/>
<dbReference type="OMA" id="VFLMTPF"/>
<dbReference type="OrthoDB" id="9007674at2759"/>
<dbReference type="TreeFam" id="TF337251"/>
<dbReference type="Proteomes" id="UP000002254">
    <property type="component" value="Unplaced"/>
</dbReference>
<dbReference type="Proteomes" id="UP000694429">
    <property type="component" value="Chromosome 16"/>
</dbReference>
<dbReference type="Proteomes" id="UP000694542">
    <property type="component" value="Unplaced"/>
</dbReference>
<dbReference type="Proteomes" id="UP000805418">
    <property type="component" value="Chromosome 16"/>
</dbReference>
<dbReference type="GO" id="GO:0005886">
    <property type="term" value="C:plasma membrane"/>
    <property type="evidence" value="ECO:0000318"/>
    <property type="project" value="GO_Central"/>
</dbReference>
<dbReference type="GO" id="GO:0004930">
    <property type="term" value="F:G protein-coupled receptor activity"/>
    <property type="evidence" value="ECO:0007669"/>
    <property type="project" value="UniProtKB-KW"/>
</dbReference>
<dbReference type="GO" id="GO:0004984">
    <property type="term" value="F:olfactory receptor activity"/>
    <property type="evidence" value="ECO:0000318"/>
    <property type="project" value="GO_Central"/>
</dbReference>
<dbReference type="GO" id="GO:0050911">
    <property type="term" value="P:detection of chemical stimulus involved in sensory perception of smell"/>
    <property type="evidence" value="ECO:0000318"/>
    <property type="project" value="GO_Central"/>
</dbReference>
<dbReference type="CDD" id="cd15429">
    <property type="entry name" value="7tmA_OR2F-like"/>
    <property type="match status" value="1"/>
</dbReference>
<dbReference type="FunFam" id="1.20.1070.10:FF:000005">
    <property type="entry name" value="Olfactory receptor"/>
    <property type="match status" value="1"/>
</dbReference>
<dbReference type="Gene3D" id="1.20.1070.10">
    <property type="entry name" value="Rhodopsin 7-helix transmembrane proteins"/>
    <property type="match status" value="1"/>
</dbReference>
<dbReference type="InterPro" id="IPR000276">
    <property type="entry name" value="GPCR_Rhodpsn"/>
</dbReference>
<dbReference type="InterPro" id="IPR017452">
    <property type="entry name" value="GPCR_Rhodpsn_7TM"/>
</dbReference>
<dbReference type="InterPro" id="IPR000725">
    <property type="entry name" value="Olfact_rcpt"/>
</dbReference>
<dbReference type="PANTHER" id="PTHR26453">
    <property type="entry name" value="OLFACTORY RECEPTOR"/>
    <property type="match status" value="1"/>
</dbReference>
<dbReference type="Pfam" id="PF13853">
    <property type="entry name" value="7tm_4"/>
    <property type="match status" value="1"/>
</dbReference>
<dbReference type="PRINTS" id="PR00237">
    <property type="entry name" value="GPCRRHODOPSN"/>
</dbReference>
<dbReference type="PRINTS" id="PR00245">
    <property type="entry name" value="OLFACTORYR"/>
</dbReference>
<dbReference type="SUPFAM" id="SSF81321">
    <property type="entry name" value="Family A G protein-coupled receptor-like"/>
    <property type="match status" value="1"/>
</dbReference>
<dbReference type="PROSITE" id="PS00237">
    <property type="entry name" value="G_PROTEIN_RECEP_F1_1"/>
    <property type="match status" value="1"/>
</dbReference>
<dbReference type="PROSITE" id="PS50262">
    <property type="entry name" value="G_PROTEIN_RECEP_F1_2"/>
    <property type="match status" value="1"/>
</dbReference>
<proteinExistence type="inferred from homology"/>
<comment type="function">
    <text>Putative odorant or sperm cell receptor.</text>
</comment>
<comment type="subcellular location">
    <subcellularLocation>
        <location>Cell membrane</location>
        <topology>Multi-pass membrane protein</topology>
    </subcellularLocation>
</comment>
<comment type="similarity">
    <text evidence="2">Belongs to the G-protein coupled receptor 1 family.</text>
</comment>
<keyword id="KW-1003">Cell membrane</keyword>
<keyword id="KW-0297">G-protein coupled receptor</keyword>
<keyword id="KW-0325">Glycoprotein</keyword>
<keyword id="KW-0472">Membrane</keyword>
<keyword id="KW-0552">Olfaction</keyword>
<keyword id="KW-0675">Receptor</keyword>
<keyword id="KW-1185">Reference proteome</keyword>
<keyword id="KW-0716">Sensory transduction</keyword>
<keyword id="KW-0807">Transducer</keyword>
<keyword id="KW-0812">Transmembrane</keyword>
<keyword id="KW-1133">Transmembrane helix</keyword>
<organism>
    <name type="scientific">Canis lupus familiaris</name>
    <name type="common">Dog</name>
    <name type="synonym">Canis familiaris</name>
    <dbReference type="NCBI Taxonomy" id="9615"/>
    <lineage>
        <taxon>Eukaryota</taxon>
        <taxon>Metazoa</taxon>
        <taxon>Chordata</taxon>
        <taxon>Craniata</taxon>
        <taxon>Vertebrata</taxon>
        <taxon>Euteleostomi</taxon>
        <taxon>Mammalia</taxon>
        <taxon>Eutheria</taxon>
        <taxon>Laurasiatheria</taxon>
        <taxon>Carnivora</taxon>
        <taxon>Caniformia</taxon>
        <taxon>Canidae</taxon>
        <taxon>Canis</taxon>
    </lineage>
</organism>
<accession>Q95156</accession>
<evidence type="ECO:0000255" key="1"/>
<evidence type="ECO:0000255" key="2">
    <source>
        <dbReference type="PROSITE-ProRule" id="PRU00521"/>
    </source>
</evidence>
<feature type="chain" id="PRO_0000150801" description="Olfactory receptor-like protein OLF3">
    <location>
        <begin position="1"/>
        <end position="317"/>
    </location>
</feature>
<feature type="topological domain" description="Extracellular" evidence="1">
    <location>
        <begin position="1"/>
        <end position="25"/>
    </location>
</feature>
<feature type="transmembrane region" description="Helical; Name=1" evidence="1">
    <location>
        <begin position="26"/>
        <end position="49"/>
    </location>
</feature>
<feature type="topological domain" description="Cytoplasmic" evidence="1">
    <location>
        <begin position="50"/>
        <end position="57"/>
    </location>
</feature>
<feature type="transmembrane region" description="Helical; Name=2" evidence="1">
    <location>
        <begin position="58"/>
        <end position="79"/>
    </location>
</feature>
<feature type="topological domain" description="Extracellular" evidence="1">
    <location>
        <begin position="80"/>
        <end position="100"/>
    </location>
</feature>
<feature type="transmembrane region" description="Helical; Name=3" evidence="1">
    <location>
        <begin position="101"/>
        <end position="120"/>
    </location>
</feature>
<feature type="topological domain" description="Cytoplasmic" evidence="1">
    <location>
        <begin position="121"/>
        <end position="139"/>
    </location>
</feature>
<feature type="transmembrane region" description="Helical; Name=4" evidence="1">
    <location>
        <begin position="140"/>
        <end position="158"/>
    </location>
</feature>
<feature type="topological domain" description="Extracellular" evidence="1">
    <location>
        <begin position="159"/>
        <end position="196"/>
    </location>
</feature>
<feature type="transmembrane region" description="Helical; Name=5" evidence="1">
    <location>
        <begin position="197"/>
        <end position="219"/>
    </location>
</feature>
<feature type="topological domain" description="Cytoplasmic" evidence="1">
    <location>
        <begin position="220"/>
        <end position="236"/>
    </location>
</feature>
<feature type="transmembrane region" description="Helical; Name=6" evidence="1">
    <location>
        <begin position="237"/>
        <end position="260"/>
    </location>
</feature>
<feature type="topological domain" description="Extracellular" evidence="1">
    <location>
        <begin position="261"/>
        <end position="272"/>
    </location>
</feature>
<feature type="transmembrane region" description="Helical; Name=7" evidence="1">
    <location>
        <begin position="273"/>
        <end position="292"/>
    </location>
</feature>
<feature type="topological domain" description="Cytoplasmic" evidence="1">
    <location>
        <begin position="293"/>
        <end position="317"/>
    </location>
</feature>
<feature type="glycosylation site" description="N-linked (GlcNAc...) asparagine" evidence="1">
    <location>
        <position position="5"/>
    </location>
</feature>
<sequence length="317" mass="35238">MGTGNQTWVREFVLLGLSSDWDTEVSLFVLFLITYMVTVLGNFLIILLIRLDSRLHTPMYFFLTNLSLVDVSYATSIIPQMLAHLLAAHKAIPFVSCAAQLFFSLGLGGIEFVLLAVMAYDRYVAVCDPLRYSVIMHGGLCTRLAITSWVSGSMNSLMQTVITFQLPMCTNKYIDHISCELLAVVRLACVDTSSNEIAIMVSSIVLLMTPFCLVLLSYIQIISTILKIQSTEGRKKAFHTCASHLTVVVLCYGMAIFTYIQPRSSPSVLQEKLISLFYSVLTPMLNPMIYSVRNKEVKGAWQKLLGQLTGITSKLAT</sequence>
<name>OLF3_CANLF</name>